<keyword id="KW-0030">Aminoacyl-tRNA synthetase</keyword>
<keyword id="KW-0067">ATP-binding</keyword>
<keyword id="KW-0963">Cytoplasm</keyword>
<keyword id="KW-0436">Ligase</keyword>
<keyword id="KW-0547">Nucleotide-binding</keyword>
<keyword id="KW-0648">Protein biosynthesis</keyword>
<accession>A1RDW4</accession>
<organism>
    <name type="scientific">Shewanella sp. (strain W3-18-1)</name>
    <dbReference type="NCBI Taxonomy" id="351745"/>
    <lineage>
        <taxon>Bacteria</taxon>
        <taxon>Pseudomonadati</taxon>
        <taxon>Pseudomonadota</taxon>
        <taxon>Gammaproteobacteria</taxon>
        <taxon>Alteromonadales</taxon>
        <taxon>Shewanellaceae</taxon>
        <taxon>Shewanella</taxon>
    </lineage>
</organism>
<name>SYGB_SHESW</name>
<reference key="1">
    <citation type="submission" date="2006-12" db="EMBL/GenBank/DDBJ databases">
        <title>Complete sequence of Shewanella sp. W3-18-1.</title>
        <authorList>
            <consortium name="US DOE Joint Genome Institute"/>
            <person name="Copeland A."/>
            <person name="Lucas S."/>
            <person name="Lapidus A."/>
            <person name="Barry K."/>
            <person name="Detter J.C."/>
            <person name="Glavina del Rio T."/>
            <person name="Hammon N."/>
            <person name="Israni S."/>
            <person name="Dalin E."/>
            <person name="Tice H."/>
            <person name="Pitluck S."/>
            <person name="Chain P."/>
            <person name="Malfatti S."/>
            <person name="Shin M."/>
            <person name="Vergez L."/>
            <person name="Schmutz J."/>
            <person name="Larimer F."/>
            <person name="Land M."/>
            <person name="Hauser L."/>
            <person name="Kyrpides N."/>
            <person name="Lykidis A."/>
            <person name="Tiedje J."/>
            <person name="Richardson P."/>
        </authorList>
    </citation>
    <scope>NUCLEOTIDE SEQUENCE [LARGE SCALE GENOMIC DNA]</scope>
    <source>
        <strain>W3-18-1</strain>
    </source>
</reference>
<sequence length="689" mass="75139">MNFENLLIELGTEELPPKSLRKLAESFLANFTEELTKADLAFSSAVWYAAPRRLAINVTELALAQADKIVEKRGPAVSSAFDAEGKPTKAAEGWARGNGITVEQAERLVTDKGEWLVHNAKVEGVETKSLIAAMAQRALDKLPIPKPMRWGNNKTQFIRPVHTATILLGSELIEGELLGIKSARTVRGHRFMGLKQFELAHADHYLADLKEKGKVIADYESRKALIKADAEKAAAKIGGTADIEDSLLEEVASLVEWPVVLTASFEEKFLSVPSEALVYTMKGDQKYFPVFDDAGKLLPNFIFVANIESKDPAQIISGNEKVVRPRLADAEFFFNTDKKHTLESRLPSLETVLFQQQLGTLKDKVNRISALAAFIAEQTGANAVDAARAGLLSKTDLMTNMVMEFTDTQGTMGMHYARLDGETEAVAVAMEEQYKPKFSGDTVPSAGVSCAVALADKLDTLVGIFGIGQAPKGAADPFALRRAAIGVLRIIVENKLPLDLVTLIAKAQELHGTHLSNVNASDEVLEFLMARFRAWYQDKGIGVDVILAVLARRPTRPADFDSRINAVSHFRSLEASGALAAANKRVSNILAKVEGALPTTIDASLLTEAAEQALAAKLNELQPQLAPLFANADYQQALTLLAGLRESVDQFFEDVMVMADDEALKNNRLALLNNLREQFLHVADISLLQ</sequence>
<comment type="catalytic activity">
    <reaction evidence="1">
        <text>tRNA(Gly) + glycine + ATP = glycyl-tRNA(Gly) + AMP + diphosphate</text>
        <dbReference type="Rhea" id="RHEA:16013"/>
        <dbReference type="Rhea" id="RHEA-COMP:9664"/>
        <dbReference type="Rhea" id="RHEA-COMP:9683"/>
        <dbReference type="ChEBI" id="CHEBI:30616"/>
        <dbReference type="ChEBI" id="CHEBI:33019"/>
        <dbReference type="ChEBI" id="CHEBI:57305"/>
        <dbReference type="ChEBI" id="CHEBI:78442"/>
        <dbReference type="ChEBI" id="CHEBI:78522"/>
        <dbReference type="ChEBI" id="CHEBI:456215"/>
        <dbReference type="EC" id="6.1.1.14"/>
    </reaction>
</comment>
<comment type="subunit">
    <text evidence="1">Tetramer of two alpha and two beta subunits.</text>
</comment>
<comment type="subcellular location">
    <subcellularLocation>
        <location evidence="1">Cytoplasm</location>
    </subcellularLocation>
</comment>
<comment type="similarity">
    <text evidence="1">Belongs to the class-II aminoacyl-tRNA synthetase family.</text>
</comment>
<dbReference type="EC" id="6.1.1.14" evidence="1"/>
<dbReference type="EMBL" id="CP000503">
    <property type="protein sequence ID" value="ABM22859.1"/>
    <property type="molecule type" value="Genomic_DNA"/>
</dbReference>
<dbReference type="RefSeq" id="WP_011787429.1">
    <property type="nucleotide sequence ID" value="NC_008750.1"/>
</dbReference>
<dbReference type="SMR" id="A1RDW4"/>
<dbReference type="KEGG" id="shw:Sputw3181_0006"/>
<dbReference type="HOGENOM" id="CLU_007220_2_2_6"/>
<dbReference type="Proteomes" id="UP000002597">
    <property type="component" value="Chromosome"/>
</dbReference>
<dbReference type="GO" id="GO:0005829">
    <property type="term" value="C:cytosol"/>
    <property type="evidence" value="ECO:0007669"/>
    <property type="project" value="TreeGrafter"/>
</dbReference>
<dbReference type="GO" id="GO:0004814">
    <property type="term" value="F:arginine-tRNA ligase activity"/>
    <property type="evidence" value="ECO:0007669"/>
    <property type="project" value="InterPro"/>
</dbReference>
<dbReference type="GO" id="GO:0005524">
    <property type="term" value="F:ATP binding"/>
    <property type="evidence" value="ECO:0007669"/>
    <property type="project" value="UniProtKB-UniRule"/>
</dbReference>
<dbReference type="GO" id="GO:0004820">
    <property type="term" value="F:glycine-tRNA ligase activity"/>
    <property type="evidence" value="ECO:0007669"/>
    <property type="project" value="UniProtKB-UniRule"/>
</dbReference>
<dbReference type="GO" id="GO:0006420">
    <property type="term" value="P:arginyl-tRNA aminoacylation"/>
    <property type="evidence" value="ECO:0007669"/>
    <property type="project" value="InterPro"/>
</dbReference>
<dbReference type="GO" id="GO:0006426">
    <property type="term" value="P:glycyl-tRNA aminoacylation"/>
    <property type="evidence" value="ECO:0007669"/>
    <property type="project" value="UniProtKB-UniRule"/>
</dbReference>
<dbReference type="Gene3D" id="1.10.730.10">
    <property type="entry name" value="Isoleucyl-tRNA Synthetase, Domain 1"/>
    <property type="match status" value="1"/>
</dbReference>
<dbReference type="HAMAP" id="MF_00255">
    <property type="entry name" value="Gly_tRNA_synth_beta"/>
    <property type="match status" value="1"/>
</dbReference>
<dbReference type="InterPro" id="IPR008909">
    <property type="entry name" value="DALR_anticod-bd"/>
</dbReference>
<dbReference type="InterPro" id="IPR015944">
    <property type="entry name" value="Gly-tRNA-synth_bsu"/>
</dbReference>
<dbReference type="InterPro" id="IPR006194">
    <property type="entry name" value="Gly-tRNA-synth_heterodimer"/>
</dbReference>
<dbReference type="NCBIfam" id="TIGR00211">
    <property type="entry name" value="glyS"/>
    <property type="match status" value="1"/>
</dbReference>
<dbReference type="PANTHER" id="PTHR30075:SF2">
    <property type="entry name" value="GLYCINE--TRNA LIGASE, CHLOROPLASTIC_MITOCHONDRIAL 2"/>
    <property type="match status" value="1"/>
</dbReference>
<dbReference type="PANTHER" id="PTHR30075">
    <property type="entry name" value="GLYCYL-TRNA SYNTHETASE"/>
    <property type="match status" value="1"/>
</dbReference>
<dbReference type="Pfam" id="PF05746">
    <property type="entry name" value="DALR_1"/>
    <property type="match status" value="1"/>
</dbReference>
<dbReference type="Pfam" id="PF02092">
    <property type="entry name" value="tRNA_synt_2f"/>
    <property type="match status" value="1"/>
</dbReference>
<dbReference type="PRINTS" id="PR01045">
    <property type="entry name" value="TRNASYNTHGB"/>
</dbReference>
<dbReference type="SMART" id="SM00836">
    <property type="entry name" value="DALR_1"/>
    <property type="match status" value="1"/>
</dbReference>
<dbReference type="SUPFAM" id="SSF109604">
    <property type="entry name" value="HD-domain/PDEase-like"/>
    <property type="match status" value="1"/>
</dbReference>
<dbReference type="PROSITE" id="PS50861">
    <property type="entry name" value="AA_TRNA_LIGASE_II_GLYAB"/>
    <property type="match status" value="1"/>
</dbReference>
<protein>
    <recommendedName>
        <fullName evidence="1">Glycine--tRNA ligase beta subunit</fullName>
        <ecNumber evidence="1">6.1.1.14</ecNumber>
    </recommendedName>
    <alternativeName>
        <fullName evidence="1">Glycyl-tRNA synthetase beta subunit</fullName>
        <shortName evidence="1">GlyRS</shortName>
    </alternativeName>
</protein>
<gene>
    <name evidence="1" type="primary">glyS</name>
    <name type="ordered locus">Sputw3181_0006</name>
</gene>
<evidence type="ECO:0000255" key="1">
    <source>
        <dbReference type="HAMAP-Rule" id="MF_00255"/>
    </source>
</evidence>
<proteinExistence type="inferred from homology"/>
<feature type="chain" id="PRO_1000006410" description="Glycine--tRNA ligase beta subunit">
    <location>
        <begin position="1"/>
        <end position="689"/>
    </location>
</feature>